<evidence type="ECO:0000255" key="1"/>
<evidence type="ECO:0000255" key="2">
    <source>
        <dbReference type="PROSITE-ProRule" id="PRU00258"/>
    </source>
</evidence>
<evidence type="ECO:0000255" key="3">
    <source>
        <dbReference type="PROSITE-ProRule" id="PRU01348"/>
    </source>
</evidence>
<evidence type="ECO:0000255" key="4">
    <source>
        <dbReference type="PROSITE-ProRule" id="PRU01363"/>
    </source>
</evidence>
<evidence type="ECO:0000256" key="5">
    <source>
        <dbReference type="SAM" id="MobiDB-lite"/>
    </source>
</evidence>
<evidence type="ECO:0000269" key="6">
    <source>
    </source>
</evidence>
<evidence type="ECO:0000303" key="7">
    <source>
    </source>
</evidence>
<evidence type="ECO:0000305" key="8">
    <source>
    </source>
</evidence>
<reference key="1">
    <citation type="journal article" date="2015" name="Genome Announc.">
        <title>Genome sequence of the AIDS-associated pathogen Penicillium marneffei (ATCC18224) and its near taxonomic relative Talaromyces stipitatus (ATCC10500).</title>
        <authorList>
            <person name="Nierman W.C."/>
            <person name="Fedorova-Abrams N.D."/>
            <person name="Andrianopoulos A."/>
        </authorList>
    </citation>
    <scope>NUCLEOTIDE SEQUENCE [LARGE SCALE GENOMIC DNA]</scope>
    <source>
        <strain>ATCC 10500 / CBS 375.48 / QM 6759 / NRRL 1006</strain>
    </source>
</reference>
<reference key="2">
    <citation type="journal article" date="2022" name="Molecules">
        <title>Putative Biosynthesis of Talarodioxadione &amp; Talarooxime from Talaromyces stipitatus.</title>
        <authorList>
            <person name="Al Fahad A.J."/>
        </authorList>
    </citation>
    <scope>FUNCTION</scope>
    <scope>DOMAIN</scope>
</reference>
<protein>
    <recommendedName>
        <fullName evidence="7">Non-reducing polyketide synthase tpeB</fullName>
        <shortName evidence="7">NR-PKS tpeB</shortName>
        <ecNumber evidence="8">2.3.1.-</ecNumber>
    </recommendedName>
    <alternativeName>
        <fullName evidence="7">Polyesters biosynthesis cluster protein B</fullName>
    </alternativeName>
</protein>
<name>TPEB_TALSN</name>
<keyword id="KW-0511">Multifunctional enzyme</keyword>
<keyword id="KW-0596">Phosphopantetheine</keyword>
<keyword id="KW-0597">Phosphoprotein</keyword>
<keyword id="KW-1185">Reference proteome</keyword>
<keyword id="KW-0677">Repeat</keyword>
<keyword id="KW-0808">Transferase</keyword>
<gene>
    <name evidence="7" type="primary">tpeB</name>
    <name type="ORF">TSTA_008140</name>
</gene>
<feature type="chain" id="PRO_0000457628" description="Non-reducing polyketide synthase tpeB">
    <location>
        <begin position="1"/>
        <end position="2200"/>
    </location>
</feature>
<feature type="domain" description="Starter acyltransferase (SAT)" evidence="1 8">
    <location>
        <begin position="16"/>
        <end position="255"/>
    </location>
</feature>
<feature type="domain" description="Ketosynthase family 3 (KS3)" evidence="3 8">
    <location>
        <begin position="382"/>
        <end position="815"/>
    </location>
</feature>
<feature type="domain" description="Malonyl-CoA:ACP transacylase (MAT)" evidence="1 8">
    <location>
        <begin position="914"/>
        <end position="1202"/>
    </location>
</feature>
<feature type="domain" description="PKS/mFAS DH" evidence="4">
    <location>
        <begin position="1300"/>
        <end position="1617"/>
    </location>
</feature>
<feature type="domain" description="Carrier 1" evidence="2 8">
    <location>
        <begin position="1671"/>
        <end position="1748"/>
    </location>
</feature>
<feature type="domain" description="Carrier 2" evidence="2 8">
    <location>
        <begin position="1791"/>
        <end position="1865"/>
    </location>
</feature>
<feature type="region of interest" description="Product template (PT) domain" evidence="1 8">
    <location>
        <begin position="1296"/>
        <end position="1621"/>
    </location>
</feature>
<feature type="region of interest" description="N-terminal hotdog fold" evidence="4">
    <location>
        <begin position="1300"/>
        <end position="1433"/>
    </location>
</feature>
<feature type="region of interest" description="C-terminal hotdog fold" evidence="4">
    <location>
        <begin position="1462"/>
        <end position="1617"/>
    </location>
</feature>
<feature type="region of interest" description="Disordered" evidence="5">
    <location>
        <begin position="1625"/>
        <end position="1652"/>
    </location>
</feature>
<feature type="region of interest" description="Thioesterase (TE) domain" evidence="1 8">
    <location>
        <begin position="1931"/>
        <end position="2173"/>
    </location>
</feature>
<feature type="compositionally biased region" description="Low complexity" evidence="5">
    <location>
        <begin position="1636"/>
        <end position="1650"/>
    </location>
</feature>
<feature type="active site" description="For beta-ketoacyl synthase activity" evidence="3">
    <location>
        <position position="554"/>
    </location>
</feature>
<feature type="active site" description="For beta-ketoacyl synthase activity" evidence="3">
    <location>
        <position position="690"/>
    </location>
</feature>
<feature type="active site" description="For beta-ketoacyl synthase activity" evidence="3">
    <location>
        <position position="729"/>
    </location>
</feature>
<feature type="active site" description="Proton acceptor; for dehydratase activity" evidence="4">
    <location>
        <position position="1332"/>
    </location>
</feature>
<feature type="active site" description="Proton donor; for dehydratase activity" evidence="4">
    <location>
        <position position="1522"/>
    </location>
</feature>
<feature type="modified residue" description="O-(pantetheine 4'-phosphoryl)serine" evidence="2">
    <location>
        <position position="1708"/>
    </location>
</feature>
<feature type="modified residue" description="O-(pantetheine 4'-phosphoryl)serine" evidence="2">
    <location>
        <position position="1825"/>
    </location>
</feature>
<accession>B8MV60</accession>
<organism>
    <name type="scientific">Talaromyces stipitatus (strain ATCC 10500 / CBS 375.48 / QM 6759 / NRRL 1006)</name>
    <name type="common">Penicillium stipitatum</name>
    <dbReference type="NCBI Taxonomy" id="441959"/>
    <lineage>
        <taxon>Eukaryota</taxon>
        <taxon>Fungi</taxon>
        <taxon>Dikarya</taxon>
        <taxon>Ascomycota</taxon>
        <taxon>Pezizomycotina</taxon>
        <taxon>Eurotiomycetes</taxon>
        <taxon>Eurotiomycetidae</taxon>
        <taxon>Eurotiales</taxon>
        <taxon>Trichocomaceae</taxon>
        <taxon>Talaromyces</taxon>
        <taxon>Talaromyces sect. Talaromyces</taxon>
    </lineage>
</organism>
<dbReference type="EC" id="2.3.1.-" evidence="8"/>
<dbReference type="EMBL" id="EQ962662">
    <property type="protein sequence ID" value="EED11516.1"/>
    <property type="molecule type" value="Genomic_DNA"/>
</dbReference>
<dbReference type="RefSeq" id="XP_002488697.1">
    <property type="nucleotide sequence ID" value="XM_002488652.1"/>
</dbReference>
<dbReference type="SMR" id="B8MV60"/>
<dbReference type="STRING" id="441959.B8MV60"/>
<dbReference type="GeneID" id="8110151"/>
<dbReference type="VEuPathDB" id="FungiDB:TSTA_008140"/>
<dbReference type="eggNOG" id="KOG1202">
    <property type="taxonomic scope" value="Eukaryota"/>
</dbReference>
<dbReference type="HOGENOM" id="CLU_000022_6_2_1"/>
<dbReference type="InParanoid" id="B8MV60"/>
<dbReference type="OMA" id="EMAYHAL"/>
<dbReference type="OrthoDB" id="329835at2759"/>
<dbReference type="PhylomeDB" id="B8MV60"/>
<dbReference type="Proteomes" id="UP000001745">
    <property type="component" value="Unassembled WGS sequence"/>
</dbReference>
<dbReference type="GO" id="GO:0004315">
    <property type="term" value="F:3-oxoacyl-[acyl-carrier-protein] synthase activity"/>
    <property type="evidence" value="ECO:0007669"/>
    <property type="project" value="InterPro"/>
</dbReference>
<dbReference type="GO" id="GO:0047879">
    <property type="term" value="F:erythronolide synthase activity"/>
    <property type="evidence" value="ECO:0007669"/>
    <property type="project" value="UniProtKB-EC"/>
</dbReference>
<dbReference type="GO" id="GO:0004312">
    <property type="term" value="F:fatty acid synthase activity"/>
    <property type="evidence" value="ECO:0007669"/>
    <property type="project" value="TreeGrafter"/>
</dbReference>
<dbReference type="GO" id="GO:0031177">
    <property type="term" value="F:phosphopantetheine binding"/>
    <property type="evidence" value="ECO:0007669"/>
    <property type="project" value="InterPro"/>
</dbReference>
<dbReference type="GO" id="GO:0006633">
    <property type="term" value="P:fatty acid biosynthetic process"/>
    <property type="evidence" value="ECO:0007669"/>
    <property type="project" value="InterPro"/>
</dbReference>
<dbReference type="GO" id="GO:0044550">
    <property type="term" value="P:secondary metabolite biosynthetic process"/>
    <property type="evidence" value="ECO:0007669"/>
    <property type="project" value="TreeGrafter"/>
</dbReference>
<dbReference type="CDD" id="cd00833">
    <property type="entry name" value="PKS"/>
    <property type="match status" value="1"/>
</dbReference>
<dbReference type="Gene3D" id="3.30.70.3290">
    <property type="match status" value="1"/>
</dbReference>
<dbReference type="Gene3D" id="3.40.47.10">
    <property type="match status" value="1"/>
</dbReference>
<dbReference type="Gene3D" id="1.10.1200.10">
    <property type="entry name" value="ACP-like"/>
    <property type="match status" value="2"/>
</dbReference>
<dbReference type="Gene3D" id="3.40.50.1820">
    <property type="entry name" value="alpha/beta hydrolase"/>
    <property type="match status" value="1"/>
</dbReference>
<dbReference type="Gene3D" id="3.40.366.10">
    <property type="entry name" value="Malonyl-Coenzyme A Acyl Carrier Protein, domain 2"/>
    <property type="match status" value="2"/>
</dbReference>
<dbReference type="Gene3D" id="3.10.129.110">
    <property type="entry name" value="Polyketide synthase dehydratase"/>
    <property type="match status" value="1"/>
</dbReference>
<dbReference type="InterPro" id="IPR029058">
    <property type="entry name" value="AB_hydrolase_fold"/>
</dbReference>
<dbReference type="InterPro" id="IPR001227">
    <property type="entry name" value="Ac_transferase_dom_sf"/>
</dbReference>
<dbReference type="InterPro" id="IPR036736">
    <property type="entry name" value="ACP-like_sf"/>
</dbReference>
<dbReference type="InterPro" id="IPR014043">
    <property type="entry name" value="Acyl_transferase_dom"/>
</dbReference>
<dbReference type="InterPro" id="IPR016035">
    <property type="entry name" value="Acyl_Trfase/lysoPLipase"/>
</dbReference>
<dbReference type="InterPro" id="IPR018201">
    <property type="entry name" value="Ketoacyl_synth_AS"/>
</dbReference>
<dbReference type="InterPro" id="IPR014031">
    <property type="entry name" value="Ketoacyl_synth_C"/>
</dbReference>
<dbReference type="InterPro" id="IPR014030">
    <property type="entry name" value="Ketoacyl_synth_N"/>
</dbReference>
<dbReference type="InterPro" id="IPR016036">
    <property type="entry name" value="Malonyl_transacylase_ACP-bd"/>
</dbReference>
<dbReference type="InterPro" id="IPR020841">
    <property type="entry name" value="PKS_Beta-ketoAc_synthase_dom"/>
</dbReference>
<dbReference type="InterPro" id="IPR042104">
    <property type="entry name" value="PKS_dehydratase_sf"/>
</dbReference>
<dbReference type="InterPro" id="IPR049900">
    <property type="entry name" value="PKS_mFAS_DH"/>
</dbReference>
<dbReference type="InterPro" id="IPR050091">
    <property type="entry name" value="PKS_NRPS_Biosynth_Enz"/>
</dbReference>
<dbReference type="InterPro" id="IPR020806">
    <property type="entry name" value="PKS_PP-bd"/>
</dbReference>
<dbReference type="InterPro" id="IPR009081">
    <property type="entry name" value="PP-bd_ACP"/>
</dbReference>
<dbReference type="InterPro" id="IPR030918">
    <property type="entry name" value="PT_fungal_PKS"/>
</dbReference>
<dbReference type="InterPro" id="IPR032088">
    <property type="entry name" value="SAT"/>
</dbReference>
<dbReference type="InterPro" id="IPR001031">
    <property type="entry name" value="Thioesterase"/>
</dbReference>
<dbReference type="InterPro" id="IPR016039">
    <property type="entry name" value="Thiolase-like"/>
</dbReference>
<dbReference type="NCBIfam" id="TIGR04532">
    <property type="entry name" value="PT_fungal_PKS"/>
    <property type="match status" value="1"/>
</dbReference>
<dbReference type="PANTHER" id="PTHR43775">
    <property type="entry name" value="FATTY ACID SYNTHASE"/>
    <property type="match status" value="1"/>
</dbReference>
<dbReference type="PANTHER" id="PTHR43775:SF37">
    <property type="entry name" value="SI:DKEY-61P9.11"/>
    <property type="match status" value="1"/>
</dbReference>
<dbReference type="Pfam" id="PF00698">
    <property type="entry name" value="Acyl_transf_1"/>
    <property type="match status" value="1"/>
</dbReference>
<dbReference type="Pfam" id="PF22621">
    <property type="entry name" value="CurL-like_PKS_C"/>
    <property type="match status" value="1"/>
</dbReference>
<dbReference type="Pfam" id="PF00109">
    <property type="entry name" value="ketoacyl-synt"/>
    <property type="match status" value="1"/>
</dbReference>
<dbReference type="Pfam" id="PF02801">
    <property type="entry name" value="Ketoacyl-synt_C"/>
    <property type="match status" value="1"/>
</dbReference>
<dbReference type="Pfam" id="PF00550">
    <property type="entry name" value="PP-binding"/>
    <property type="match status" value="2"/>
</dbReference>
<dbReference type="Pfam" id="PF16073">
    <property type="entry name" value="SAT"/>
    <property type="match status" value="1"/>
</dbReference>
<dbReference type="Pfam" id="PF00975">
    <property type="entry name" value="Thioesterase"/>
    <property type="match status" value="1"/>
</dbReference>
<dbReference type="SMART" id="SM00827">
    <property type="entry name" value="PKS_AT"/>
    <property type="match status" value="1"/>
</dbReference>
<dbReference type="SMART" id="SM00825">
    <property type="entry name" value="PKS_KS"/>
    <property type="match status" value="1"/>
</dbReference>
<dbReference type="SMART" id="SM00823">
    <property type="entry name" value="PKS_PP"/>
    <property type="match status" value="2"/>
</dbReference>
<dbReference type="SUPFAM" id="SSF47336">
    <property type="entry name" value="ACP-like"/>
    <property type="match status" value="2"/>
</dbReference>
<dbReference type="SUPFAM" id="SSF53474">
    <property type="entry name" value="alpha/beta-Hydrolases"/>
    <property type="match status" value="1"/>
</dbReference>
<dbReference type="SUPFAM" id="SSF52151">
    <property type="entry name" value="FabD/lysophospholipase-like"/>
    <property type="match status" value="1"/>
</dbReference>
<dbReference type="SUPFAM" id="SSF55048">
    <property type="entry name" value="Probable ACP-binding domain of malonyl-CoA ACP transacylase"/>
    <property type="match status" value="1"/>
</dbReference>
<dbReference type="SUPFAM" id="SSF53901">
    <property type="entry name" value="Thiolase-like"/>
    <property type="match status" value="1"/>
</dbReference>
<dbReference type="PROSITE" id="PS50075">
    <property type="entry name" value="CARRIER"/>
    <property type="match status" value="2"/>
</dbReference>
<dbReference type="PROSITE" id="PS00606">
    <property type="entry name" value="KS3_1"/>
    <property type="match status" value="1"/>
</dbReference>
<dbReference type="PROSITE" id="PS52004">
    <property type="entry name" value="KS3_2"/>
    <property type="match status" value="1"/>
</dbReference>
<dbReference type="PROSITE" id="PS52019">
    <property type="entry name" value="PKS_MFAS_DH"/>
    <property type="match status" value="1"/>
</dbReference>
<proteinExistence type="inferred from homology"/>
<comment type="function">
    <text evidence="6 8">Non-reducing polyketide synthase; part of the gene cluster that mediates the biosynthesis of polyesters containing 2,4-dihydroxy-6-(2-hydroxypropyl)benzoate and 3-hydroxybutyrate moieties, such as talapolyester G, 15G256beta and 15G256beta-2; as well as to oxidized derivatives such as 15G256alpha (PubMed:35889347). The biosynthesis of the polyesters probably starts with the formation of the diketide 3-hydroxybutyryl-S-ACP catalyzed by the partially reducing polyketide synthase tpeA (Probable). The acceptance of 3-hydroxybutyryl by the non-reducing polyketide synthase tpeB would initiate further elongation and cyclization, catalyzed by KS and PT, respectively, to form 2,4-dihydroxy-6-(2-hydroxyn-propyl)benzoyl-S-ACP intermediate (Probable). The TE domain could catalyze lactonization at this step to yield 6-hydroxymellein as a derailment product (Probable). The polyesterification process maybe occurs when additional molecules of 3-hydroxybutyryl are transferred to tpeB (Probable). Following the first esterification step, an intramolecular cyclization catalyzed by the TE domain of tpeB would give talarodioxadione 1, whereas the ethyl esterification of talapolyester G perhaps happens spontaneously (Probable). Further oxidation by the cytochrome P450 monooxygenase tpeC then leads to the formation of oxidized derivatives (Probable).</text>
</comment>
<comment type="cofactor">
    <cofactor evidence="2">
        <name>pantetheine 4'-phosphate</name>
        <dbReference type="ChEBI" id="CHEBI:47942"/>
    </cofactor>
</comment>
<comment type="pathway">
    <text evidence="6">Secondary metabolite biosynthesis.</text>
</comment>
<comment type="domain">
    <text evidence="8">Multidomain protein; including a starter unit:ACP transacylase (SAT) that selects the starter unit; a ketosynthase (KS) that catalyzes repeated decarboxylative condensation to elongate the polyketide backbone; a malonyl-CoA:ACP transacylase (MAT) that selects and transfers the extender unit malonyl-CoA; a product template (PT) domain that controls the immediate cyclization regioselectivity of the reactive polyketide backbone; and 2 acyl-carrier protein (ACP) domains that serve as the tethers of the growing and completed polyketide via their phosphopantetheinyl arms. The release of the polyketide chain from the non-reducing polyketide synthase is mediated by the thioesterase (TE) domain localized at the C-ter of the protein.</text>
</comment>
<sequence length="2200" mass="240992">MGSLSSARESAQRITFFGDQTVDTLLCIKDLANRSHQLPILRRYLREAADKLQLLLSQIELGDYECYRNFETIVELAEIYSKQDGTYEPIGCALWTISQFADYLSRSETDPSILTLSDSAAQPTYVVGVCGGLLLGAAAATARDINELLDIGRKLVDVSFNLGVAQWKRAMDIEGKPGRWAVAIVNVPPKQIRNIITAFNEDMAIPKHRQFYISFLAKGWAAISGPPSIFPELWEYSSTLSSASKMDLPLGTPAHAAHLRSLNIEELIGSGSVLDLPVRQDRLVISTSTCKPFESQTFGSLLSSSLHDITGETLHIAGVNDYVASCLSRETLVQVSSFGPTSQIGSFKKALEDSGLKVDLDLSVPESKTPNLLKNPDARDGSNMIAIVGQSVRLPGSDDVKTFWENLKAGQTFESEIPPSRFDLQNYYDTTGAKKSSVTTRFGHFLDRPGLFDCRLFNVSPREAKQMDPIQRLLLMCSYEALQTAGYSPDSSLSTNRMRVATYFGQSGDDWRQGRASQDVDIYYIPGTIRSFAPGKLNYHYKWGGGNYSVDSACAASTTSVIMACNALLGRECDMALAGGGQLHLEPENYAGLSRAGFLSKTTGGCKTFREDADGYCRGEGIGVVVLKRLEDALADNDNVLAVVRGADRNYSWDASSITHPSANAQATVIQRVLRNTGVEPADIGFVEMHGTGTTAGDSVEMKTVTTVFGSRPKDNPLYIGAVKANFGHGEAAAGITSLLKAVQMLGQKTIPRQPGFPGPKDPTFDHLDAMNIRIPDSSFPFPTPTRPFSQDGKMRILVNNFDASGGNNCVLLEEAPDKNVSQIQDPRQYYTVAISARTTKSLQKNMERLSDYLVKHPDTPVADVAYTSTARRIHEDLKRSYTVDSTESLVGLLQADLKKDLTGIRPATPRSVVFAFTGQGSQYSGMTKQLFETCTPFRESVQSLHDLAVWQDFPSFLNLFTDDVTDEISASPIQTQLAIVVLEMSLANLWKSWGVEPDLVIGYSLGEYVALYVSGVLSAHDVLFLVGNRAQLMDERCEIGSYSMLAVQASPEDLEEPLKAYPTSNVACRGAPRSTVVSGPSEDIAKLHAELKEKSISGTILNVPYGFHCAQVDPILEDFRDLLDRVPFSKPRIPVASSLDGVIVTDDDVFSPSYMVRQTREPVAFVSALKAIETSHLVDNTSLWVEIGPKRVLNSFIKATLAVDHDRLLHSVDEKASNWRTIATAITACWQGGVSIKWQNFHRQFTKHLRLVDLPTYAFDLKDYWIEPAAPIVQQRSAAEPLRQVAVPAVPGFPTASLQRVREERIQGDNAAVTFESTLSHPDLMGLIRGHQVNGVDLFPASGWWDMAYTAAKYIHHRIQPSRGAAPGLSMLDCSITHPLMPSASEDQQKLVIIVAKKQAGSSVVEVSFKSQEKSVEQDHGSCKIRFESKADWEAEWSRSAHFIKAAKNNVVTNATRPDGNGHKLPKPVVYTLFSNFVNYSGDFKGIQQVYLNADFQREVVADVVLPAGMYNFNLNPYWSDALIHACGFMLHSDPDLPTQDCFLFNGFEELRFLMDDLLPGVPYTSYVFMHDTNSQEVPAKRTRNVTGDIYIFQGEKIVGTVQGVVFQRLTKRILTTILGKSQDHHNSNEVRNGNATTTHTNPPAHATTQSFFAPPGIKPAVAFSSAPATVGEETAEAVIAKILTKTGANRASLSESTTLGEIGLDSLEWIELVGVFRSALDIEVPASFFFEYPKVLRLRQAIAELPLEGEKEESGSSSPDSPYGMLTPATGRFTPITASRSTHNSDGPANYANIVLDIVLSQTGFDKDDVLPSTRFDDMGLDSLCTMEVVSLVREQTGLDLPASFFHHHPTVADVRKNLGPNTEDKSKDSVKASASIAVSEPATELVVVHHPGNSPAPESLPIIDEDLKDYHCDFFLMQGSSDSAEIPMFFLPDGTGYPAVLLKLPPVFKGDNPLFTCKSPLLHRAEGREVACTIEGLALSYAEAIRRTRPHGPYLLAGYSLGAAYAYEVAKILADAGEIVQGLLFVDFNMAASVGLEHRERKPVPTNLNVGVMEQVGWMNGIHNDEKNFHIPPAPPKIKFHALSVFKSLTRYFPKPMTPSQRPRNTYALWAGAGMEDLLGPSNAGFLPEFGIIDWQMGSRRENNGPAGWENFIGGPVRCATVPCDHLSIMMSTDWVGTTANIIKDLLEDALSNPGTP</sequence>